<comment type="function">
    <text evidence="1">Together with LptE, is involved in the assembly of lipopolysaccharide (LPS) at the surface of the outer membrane.</text>
</comment>
<comment type="subunit">
    <text evidence="1">Component of the lipopolysaccharide transport and assembly complex. Interacts with LptE and LptA.</text>
</comment>
<comment type="subcellular location">
    <subcellularLocation>
        <location evidence="1">Cell outer membrane</location>
    </subcellularLocation>
</comment>
<comment type="similarity">
    <text evidence="1">Belongs to the LptD family.</text>
</comment>
<evidence type="ECO:0000255" key="1">
    <source>
        <dbReference type="HAMAP-Rule" id="MF_01411"/>
    </source>
</evidence>
<name>LPTD_YERPS</name>
<keyword id="KW-0998">Cell outer membrane</keyword>
<keyword id="KW-0472">Membrane</keyword>
<keyword id="KW-0732">Signal</keyword>
<dbReference type="EMBL" id="BX936398">
    <property type="protein sequence ID" value="CAH19876.1"/>
    <property type="molecule type" value="Genomic_DNA"/>
</dbReference>
<dbReference type="RefSeq" id="WP_011191712.1">
    <property type="nucleotide sequence ID" value="NC_006155.1"/>
</dbReference>
<dbReference type="SMR" id="Q66EQ6"/>
<dbReference type="KEGG" id="yps:YPTB0636"/>
<dbReference type="Proteomes" id="UP000001011">
    <property type="component" value="Chromosome"/>
</dbReference>
<dbReference type="GO" id="GO:0009279">
    <property type="term" value="C:cell outer membrane"/>
    <property type="evidence" value="ECO:0007669"/>
    <property type="project" value="UniProtKB-SubCell"/>
</dbReference>
<dbReference type="GO" id="GO:1990351">
    <property type="term" value="C:transporter complex"/>
    <property type="evidence" value="ECO:0007669"/>
    <property type="project" value="TreeGrafter"/>
</dbReference>
<dbReference type="GO" id="GO:0043165">
    <property type="term" value="P:Gram-negative-bacterium-type cell outer membrane assembly"/>
    <property type="evidence" value="ECO:0007669"/>
    <property type="project" value="UniProtKB-UniRule"/>
</dbReference>
<dbReference type="GO" id="GO:0015920">
    <property type="term" value="P:lipopolysaccharide transport"/>
    <property type="evidence" value="ECO:0007669"/>
    <property type="project" value="InterPro"/>
</dbReference>
<dbReference type="Gene3D" id="2.60.450.10">
    <property type="entry name" value="Lipopolysaccharide (LPS) transport protein A like domain"/>
    <property type="match status" value="1"/>
</dbReference>
<dbReference type="HAMAP" id="MF_01411">
    <property type="entry name" value="LPS_assembly_LptD"/>
    <property type="match status" value="1"/>
</dbReference>
<dbReference type="InterPro" id="IPR020889">
    <property type="entry name" value="LipoPS_assembly_LptD"/>
</dbReference>
<dbReference type="InterPro" id="IPR050218">
    <property type="entry name" value="LptD"/>
</dbReference>
<dbReference type="InterPro" id="IPR007543">
    <property type="entry name" value="LptD_C"/>
</dbReference>
<dbReference type="InterPro" id="IPR005653">
    <property type="entry name" value="OstA-like_N"/>
</dbReference>
<dbReference type="NCBIfam" id="NF002997">
    <property type="entry name" value="PRK03761.1"/>
    <property type="match status" value="1"/>
</dbReference>
<dbReference type="PANTHER" id="PTHR30189">
    <property type="entry name" value="LPS-ASSEMBLY PROTEIN"/>
    <property type="match status" value="1"/>
</dbReference>
<dbReference type="PANTHER" id="PTHR30189:SF1">
    <property type="entry name" value="LPS-ASSEMBLY PROTEIN LPTD"/>
    <property type="match status" value="1"/>
</dbReference>
<dbReference type="Pfam" id="PF04453">
    <property type="entry name" value="LptD"/>
    <property type="match status" value="1"/>
</dbReference>
<dbReference type="Pfam" id="PF03968">
    <property type="entry name" value="LptD_N"/>
    <property type="match status" value="1"/>
</dbReference>
<proteinExistence type="inferred from homology"/>
<organism>
    <name type="scientific">Yersinia pseudotuberculosis serotype I (strain IP32953)</name>
    <dbReference type="NCBI Taxonomy" id="273123"/>
    <lineage>
        <taxon>Bacteria</taxon>
        <taxon>Pseudomonadati</taxon>
        <taxon>Pseudomonadota</taxon>
        <taxon>Gammaproteobacteria</taxon>
        <taxon>Enterobacterales</taxon>
        <taxon>Yersiniaceae</taxon>
        <taxon>Yersinia</taxon>
    </lineage>
</organism>
<accession>Q66EQ6</accession>
<feature type="signal peptide" evidence="1">
    <location>
        <begin position="1"/>
        <end position="24"/>
    </location>
</feature>
<feature type="chain" id="PRO_0000020302" description="LPS-assembly protein LptD">
    <location>
        <begin position="25"/>
        <end position="780"/>
    </location>
</feature>
<protein>
    <recommendedName>
        <fullName evidence="1">LPS-assembly protein LptD</fullName>
    </recommendedName>
</protein>
<sequence>MKKRFPTLLATLIWTALYSQHTLADLAEQCMLGVPTYDQPLVTGDPNQLPVRINADKTEANYPDNALFTGNVIVQQGNSTLTANQVELTQVQKPGEVIPLRTVTATGDVNYDDPQIKLKGPKGWSNLNTKDTDIDKGKYQMVGRQGRGDADLMKLRDQSRYTILKNGTFTSCLPGDNSWSVVGSEVIHDREEQVVEVWNARFKIGKVPVFYSPYMQLPVGDKRRSGFLIPNAKFTSNNGFEFLLPYYWNIAPNFDATITPHYMERRGLQWQNEFRYLLAPGSGTMALDWLPNDRIYTGPDGTDKNATRWLYYWGHSGVMDQVWRFNINYTRVSDPAYFTDLTSQYGSTTDGYATQIFTAGYANENWNATLSSKQFQVFTAAGNSNAYRAQPQLDMNYYKNDVGPFDMHVYGQAAKFTSVNPTNPEASRFHIEPTVNLPLSNSWGSINTEAKLLATHYQQDIPASFADNASNPKLKDSVNRVLPQFKVDGKVVFDRSMDWATGFTQTLEPRAQYLYVPYRNQDDIYIYDTTLMQSDYSGLFRDRTYSGLDRIASANQVSTGLTSRIYDDARVERFNVSVGQIYYFSRSRTGNTEAIDNSNDTGSLVWAGDTFWRINDQLGLKGGAQYDTRLGSLTLGNAIMEYRRDADRMIQLNYRYASPKYIQAAVPKVYNPDYQQGISQVGTTASWPIADRWAIVGAYYYDTKAKQPASQLVGLQYNTCCWAVNLGYERKITGWNAQGQTSKYDNKIGFNIELRGLSGGHSLGTAQMLNSGILPYQSAF</sequence>
<reference key="1">
    <citation type="journal article" date="2004" name="Proc. Natl. Acad. Sci. U.S.A.">
        <title>Insights into the evolution of Yersinia pestis through whole-genome comparison with Yersinia pseudotuberculosis.</title>
        <authorList>
            <person name="Chain P.S.G."/>
            <person name="Carniel E."/>
            <person name="Larimer F.W."/>
            <person name="Lamerdin J."/>
            <person name="Stoutland P.O."/>
            <person name="Regala W.M."/>
            <person name="Georgescu A.M."/>
            <person name="Vergez L.M."/>
            <person name="Land M.L."/>
            <person name="Motin V.L."/>
            <person name="Brubaker R.R."/>
            <person name="Fowler J."/>
            <person name="Hinnebusch J."/>
            <person name="Marceau M."/>
            <person name="Medigue C."/>
            <person name="Simonet M."/>
            <person name="Chenal-Francisque V."/>
            <person name="Souza B."/>
            <person name="Dacheux D."/>
            <person name="Elliott J.M."/>
            <person name="Derbise A."/>
            <person name="Hauser L.J."/>
            <person name="Garcia E."/>
        </authorList>
    </citation>
    <scope>NUCLEOTIDE SEQUENCE [LARGE SCALE GENOMIC DNA]</scope>
    <source>
        <strain>IP32953</strain>
    </source>
</reference>
<gene>
    <name evidence="1" type="primary">lptD</name>
    <name type="synonym">imp</name>
    <name type="synonym">ostA</name>
    <name type="ordered locus">YPTB0636</name>
</gene>